<organism>
    <name type="scientific">Escherichia phage T7</name>
    <name type="common">Bacteriophage T7</name>
    <dbReference type="NCBI Taxonomy" id="10760"/>
    <lineage>
        <taxon>Viruses</taxon>
        <taxon>Duplodnaviria</taxon>
        <taxon>Heunggongvirae</taxon>
        <taxon>Uroviricota</taxon>
        <taxon>Caudoviricetes</taxon>
        <taxon>Autographiviridae</taxon>
        <taxon>Studiervirinae</taxon>
        <taxon>Teseptimavirus</taxon>
        <taxon>Teseptimavirus T7</taxon>
    </lineage>
</organism>
<reference key="1">
    <citation type="journal article" date="1983" name="J. Mol. Biol.">
        <title>Complete nucleotide sequence of bacteriophage T7 DNA and the locations of T7 genetic elements.</title>
        <authorList>
            <person name="Dunn J.J."/>
            <person name="Studier F.W."/>
        </authorList>
    </citation>
    <scope>NUCLEOTIDE SEQUENCE [LARGE SCALE GENOMIC DNA]</scope>
</reference>
<reference key="2">
    <citation type="journal article" date="1981" name="J. Mol. Biol.">
        <title>Nucleotide sequence from the genetic left end of bacteriophage T7 DNA to the beginning of gene 4.</title>
        <authorList>
            <person name="Dunn J.J."/>
            <person name="Studier F.W."/>
        </authorList>
    </citation>
    <scope>NUCLEOTIDE SEQUENCE [GENOMIC DNA]</scope>
</reference>
<reference key="3">
    <citation type="journal article" date="1980" name="Proc. Natl. Acad. Sci. U.S.A.">
        <title>Nucleotide sequence of the primary origin of bacteriophage T7 DNA replication: relationship to adjacent genes and regulatory elements.</title>
        <authorList>
            <person name="Saito H."/>
            <person name="Tabor S."/>
            <person name="Tamanoi F."/>
            <person name="Richardson C.C."/>
        </authorList>
    </citation>
    <scope>NUCLEOTIDE SEQUENCE [GENOMIC DNA]</scope>
</reference>
<sequence>MRNFEKMTKRSNRNARDFEATKGRKLNKTKRDRSHKRSWEGQ</sequence>
<protein>
    <recommendedName>
        <fullName>Uncharacterized protein 1.1</fullName>
    </recommendedName>
    <alternativeName>
        <fullName>Gene product 1.1</fullName>
        <shortName>Gp1.1</shortName>
    </alternativeName>
</protein>
<organismHost>
    <name type="scientific">Escherichia coli</name>
    <dbReference type="NCBI Taxonomy" id="562"/>
</organismHost>
<feature type="chain" id="PRO_0000106468" description="Uncharacterized protein 1.1">
    <location>
        <begin position="1"/>
        <end position="42"/>
    </location>
</feature>
<feature type="region of interest" description="Disordered" evidence="1">
    <location>
        <begin position="1"/>
        <end position="42"/>
    </location>
</feature>
<feature type="compositionally biased region" description="Basic and acidic residues" evidence="1">
    <location>
        <begin position="1"/>
        <end position="22"/>
    </location>
</feature>
<feature type="compositionally biased region" description="Basic residues" evidence="1">
    <location>
        <begin position="23"/>
        <end position="36"/>
    </location>
</feature>
<keyword id="KW-0244">Early protein</keyword>
<keyword id="KW-1185">Reference proteome</keyword>
<gene>
    <name type="ordered locus">1.1</name>
</gene>
<name>Y11_BPT7</name>
<dbReference type="EMBL" id="V01146">
    <property type="protein sequence ID" value="CAA24391.1"/>
    <property type="molecule type" value="Genomic_DNA"/>
</dbReference>
<dbReference type="EMBL" id="V01126">
    <property type="protein sequence ID" value="CAA24324.1"/>
    <property type="molecule type" value="Genomic_DNA"/>
</dbReference>
<dbReference type="EMBL" id="V01127">
    <property type="protein sequence ID" value="CAA24334.1"/>
    <property type="molecule type" value="Genomic_DNA"/>
</dbReference>
<dbReference type="PIR" id="E43002">
    <property type="entry name" value="W1BP17"/>
</dbReference>
<dbReference type="RefSeq" id="NP_041961.1">
    <property type="nucleotide sequence ID" value="NC_001604.1"/>
</dbReference>
<dbReference type="KEGG" id="vg:1261072"/>
<dbReference type="Proteomes" id="UP000000840">
    <property type="component" value="Genome"/>
</dbReference>
<dbReference type="InterPro" id="IPR013232">
    <property type="entry name" value="Phage_T7_Gp1.1"/>
</dbReference>
<dbReference type="Pfam" id="PF08200">
    <property type="entry name" value="Phage_1_1"/>
    <property type="match status" value="1"/>
</dbReference>
<proteinExistence type="predicted"/>
<accession>P03779</accession>
<evidence type="ECO:0000256" key="1">
    <source>
        <dbReference type="SAM" id="MobiDB-lite"/>
    </source>
</evidence>